<organism>
    <name type="scientific">Thermotoga petrophila (strain ATCC BAA-488 / DSM 13995 / JCM 10881 / RKU-1)</name>
    <dbReference type="NCBI Taxonomy" id="390874"/>
    <lineage>
        <taxon>Bacteria</taxon>
        <taxon>Thermotogati</taxon>
        <taxon>Thermotogota</taxon>
        <taxon>Thermotogae</taxon>
        <taxon>Thermotogales</taxon>
        <taxon>Thermotogaceae</taxon>
        <taxon>Thermotoga</taxon>
    </lineage>
</organism>
<reference key="1">
    <citation type="submission" date="2007-05" db="EMBL/GenBank/DDBJ databases">
        <title>Complete sequence of Thermotoga petrophila RKU-1.</title>
        <authorList>
            <consortium name="US DOE Joint Genome Institute"/>
            <person name="Copeland A."/>
            <person name="Lucas S."/>
            <person name="Lapidus A."/>
            <person name="Barry K."/>
            <person name="Glavina del Rio T."/>
            <person name="Dalin E."/>
            <person name="Tice H."/>
            <person name="Pitluck S."/>
            <person name="Sims D."/>
            <person name="Brettin T."/>
            <person name="Bruce D."/>
            <person name="Detter J.C."/>
            <person name="Han C."/>
            <person name="Tapia R."/>
            <person name="Schmutz J."/>
            <person name="Larimer F."/>
            <person name="Land M."/>
            <person name="Hauser L."/>
            <person name="Kyrpides N."/>
            <person name="Mikhailova N."/>
            <person name="Nelson K."/>
            <person name="Gogarten J.P."/>
            <person name="Noll K."/>
            <person name="Richardson P."/>
        </authorList>
    </citation>
    <scope>NUCLEOTIDE SEQUENCE [LARGE SCALE GENOMIC DNA]</scope>
    <source>
        <strain>ATCC BAA-488 / DSM 13995 / JCM 10881 / RKU-1</strain>
    </source>
</reference>
<feature type="chain" id="PRO_1000018140" description="Arginine--tRNA ligase">
    <location>
        <begin position="1"/>
        <end position="546"/>
    </location>
</feature>
<feature type="short sequence motif" description="'HIGH' region">
    <location>
        <begin position="122"/>
        <end position="132"/>
    </location>
</feature>
<protein>
    <recommendedName>
        <fullName evidence="1">Arginine--tRNA ligase</fullName>
        <ecNumber evidence="1">6.1.1.19</ecNumber>
    </recommendedName>
    <alternativeName>
        <fullName evidence="1">Arginyl-tRNA synthetase</fullName>
        <shortName evidence="1">ArgRS</shortName>
    </alternativeName>
</protein>
<gene>
    <name evidence="1" type="primary">argS</name>
    <name type="ordered locus">Tpet_1650</name>
</gene>
<sequence>MLVNTIRQKVSEVISKVYDSEIEFEIEIPPKKEFGDLSTNAAMKLAKTLKKNPREIAQEIVKSLDEDPSFDRIEIMGPGFINFFLSNELLRGVVKTVLERKDEYGRENTGNGVKIQFEYGSANPTGPFTVGHGRQIIIGDVLSEVFKELGYDVTREMYINDAGKQIKLLAQSLWARYNQLLGVEKEIPEGGYRGEYLVDIARDLVSEIGDKYKDLWNEEVEELFKQTALNRILSSMKDTLEKIGSSFDVYFSEKSLIEDGTVEEVLKLLKDRDVVYEKDGAVWLKVSAFIDEEDKVLVRSDGTYTYFMTDIAYHYKKYKRGFRKVYDIWGSDHHGHIPRMKAAMKALDIPDDFFNVILHQFVTLKRDDEIVRMSTRAGEFVTLDELLDEVGRDAVRYFFAMVDPNTHMVFDIDLAKAKSMDNPVYYVQYAHARIYNLFSNAEKKGVKFEEGKHLELLGNEEERVLMRNLGMFNTVLKEVAQMFAPNRLTNYLQSLAESFHAFYTKHVIVDPENPELSNARLNLALATGIVLRKGLKLIGVSAPERM</sequence>
<proteinExistence type="inferred from homology"/>
<name>SYR_THEP1</name>
<accession>A5IN82</accession>
<keyword id="KW-0030">Aminoacyl-tRNA synthetase</keyword>
<keyword id="KW-0067">ATP-binding</keyword>
<keyword id="KW-0963">Cytoplasm</keyword>
<keyword id="KW-0436">Ligase</keyword>
<keyword id="KW-0547">Nucleotide-binding</keyword>
<keyword id="KW-0648">Protein biosynthesis</keyword>
<comment type="catalytic activity">
    <reaction evidence="1">
        <text>tRNA(Arg) + L-arginine + ATP = L-arginyl-tRNA(Arg) + AMP + diphosphate</text>
        <dbReference type="Rhea" id="RHEA:20301"/>
        <dbReference type="Rhea" id="RHEA-COMP:9658"/>
        <dbReference type="Rhea" id="RHEA-COMP:9673"/>
        <dbReference type="ChEBI" id="CHEBI:30616"/>
        <dbReference type="ChEBI" id="CHEBI:32682"/>
        <dbReference type="ChEBI" id="CHEBI:33019"/>
        <dbReference type="ChEBI" id="CHEBI:78442"/>
        <dbReference type="ChEBI" id="CHEBI:78513"/>
        <dbReference type="ChEBI" id="CHEBI:456215"/>
        <dbReference type="EC" id="6.1.1.19"/>
    </reaction>
</comment>
<comment type="subunit">
    <text evidence="1">Monomer.</text>
</comment>
<comment type="subcellular location">
    <subcellularLocation>
        <location evidence="1">Cytoplasm</location>
    </subcellularLocation>
</comment>
<comment type="similarity">
    <text evidence="1">Belongs to the class-I aminoacyl-tRNA synthetase family.</text>
</comment>
<dbReference type="EC" id="6.1.1.19" evidence="1"/>
<dbReference type="EMBL" id="CP000702">
    <property type="protein sequence ID" value="ABQ47655.1"/>
    <property type="molecule type" value="Genomic_DNA"/>
</dbReference>
<dbReference type="RefSeq" id="WP_011944064.1">
    <property type="nucleotide sequence ID" value="NC_009486.1"/>
</dbReference>
<dbReference type="SMR" id="A5IN82"/>
<dbReference type="STRING" id="390874.Tpet_1650"/>
<dbReference type="KEGG" id="tpt:Tpet_1650"/>
<dbReference type="eggNOG" id="COG0018">
    <property type="taxonomic scope" value="Bacteria"/>
</dbReference>
<dbReference type="HOGENOM" id="CLU_006406_0_1_0"/>
<dbReference type="Proteomes" id="UP000006558">
    <property type="component" value="Chromosome"/>
</dbReference>
<dbReference type="GO" id="GO:0005737">
    <property type="term" value="C:cytoplasm"/>
    <property type="evidence" value="ECO:0007669"/>
    <property type="project" value="UniProtKB-SubCell"/>
</dbReference>
<dbReference type="GO" id="GO:0004814">
    <property type="term" value="F:arginine-tRNA ligase activity"/>
    <property type="evidence" value="ECO:0007669"/>
    <property type="project" value="UniProtKB-UniRule"/>
</dbReference>
<dbReference type="GO" id="GO:0005524">
    <property type="term" value="F:ATP binding"/>
    <property type="evidence" value="ECO:0007669"/>
    <property type="project" value="UniProtKB-UniRule"/>
</dbReference>
<dbReference type="GO" id="GO:0006420">
    <property type="term" value="P:arginyl-tRNA aminoacylation"/>
    <property type="evidence" value="ECO:0007669"/>
    <property type="project" value="UniProtKB-UniRule"/>
</dbReference>
<dbReference type="CDD" id="cd00671">
    <property type="entry name" value="ArgRS_core"/>
    <property type="match status" value="1"/>
</dbReference>
<dbReference type="FunFam" id="1.10.730.10:FF:000008">
    <property type="entry name" value="Arginine--tRNA ligase"/>
    <property type="match status" value="1"/>
</dbReference>
<dbReference type="FunFam" id="3.30.1360.70:FF:000003">
    <property type="entry name" value="Arginine--tRNA ligase"/>
    <property type="match status" value="1"/>
</dbReference>
<dbReference type="FunFam" id="3.40.50.620:FF:000062">
    <property type="entry name" value="Arginine--tRNA ligase"/>
    <property type="match status" value="1"/>
</dbReference>
<dbReference type="Gene3D" id="3.30.1360.70">
    <property type="entry name" value="Arginyl tRNA synthetase N-terminal domain"/>
    <property type="match status" value="1"/>
</dbReference>
<dbReference type="Gene3D" id="3.40.50.620">
    <property type="entry name" value="HUPs"/>
    <property type="match status" value="1"/>
</dbReference>
<dbReference type="Gene3D" id="1.10.730.10">
    <property type="entry name" value="Isoleucyl-tRNA Synthetase, Domain 1"/>
    <property type="match status" value="1"/>
</dbReference>
<dbReference type="HAMAP" id="MF_00123">
    <property type="entry name" value="Arg_tRNA_synth"/>
    <property type="match status" value="1"/>
</dbReference>
<dbReference type="InterPro" id="IPR001412">
    <property type="entry name" value="aa-tRNA-synth_I_CS"/>
</dbReference>
<dbReference type="InterPro" id="IPR001278">
    <property type="entry name" value="Arg-tRNA-ligase"/>
</dbReference>
<dbReference type="InterPro" id="IPR005148">
    <property type="entry name" value="Arg-tRNA-synth_N"/>
</dbReference>
<dbReference type="InterPro" id="IPR036695">
    <property type="entry name" value="Arg-tRNA-synth_N_sf"/>
</dbReference>
<dbReference type="InterPro" id="IPR035684">
    <property type="entry name" value="ArgRS_core"/>
</dbReference>
<dbReference type="InterPro" id="IPR008909">
    <property type="entry name" value="DALR_anticod-bd"/>
</dbReference>
<dbReference type="InterPro" id="IPR014729">
    <property type="entry name" value="Rossmann-like_a/b/a_fold"/>
</dbReference>
<dbReference type="InterPro" id="IPR009080">
    <property type="entry name" value="tRNAsynth_Ia_anticodon-bd"/>
</dbReference>
<dbReference type="NCBIfam" id="TIGR00456">
    <property type="entry name" value="argS"/>
    <property type="match status" value="1"/>
</dbReference>
<dbReference type="PANTHER" id="PTHR11956:SF5">
    <property type="entry name" value="ARGININE--TRNA LIGASE, CYTOPLASMIC"/>
    <property type="match status" value="1"/>
</dbReference>
<dbReference type="PANTHER" id="PTHR11956">
    <property type="entry name" value="ARGINYL-TRNA SYNTHETASE"/>
    <property type="match status" value="1"/>
</dbReference>
<dbReference type="Pfam" id="PF03485">
    <property type="entry name" value="Arg_tRNA_synt_N"/>
    <property type="match status" value="1"/>
</dbReference>
<dbReference type="Pfam" id="PF05746">
    <property type="entry name" value="DALR_1"/>
    <property type="match status" value="1"/>
</dbReference>
<dbReference type="Pfam" id="PF00750">
    <property type="entry name" value="tRNA-synt_1d"/>
    <property type="match status" value="1"/>
</dbReference>
<dbReference type="PRINTS" id="PR01038">
    <property type="entry name" value="TRNASYNTHARG"/>
</dbReference>
<dbReference type="SMART" id="SM01016">
    <property type="entry name" value="Arg_tRNA_synt_N"/>
    <property type="match status" value="1"/>
</dbReference>
<dbReference type="SMART" id="SM00836">
    <property type="entry name" value="DALR_1"/>
    <property type="match status" value="1"/>
</dbReference>
<dbReference type="SUPFAM" id="SSF47323">
    <property type="entry name" value="Anticodon-binding domain of a subclass of class I aminoacyl-tRNA synthetases"/>
    <property type="match status" value="1"/>
</dbReference>
<dbReference type="SUPFAM" id="SSF55190">
    <property type="entry name" value="Arginyl-tRNA synthetase (ArgRS), N-terminal 'additional' domain"/>
    <property type="match status" value="1"/>
</dbReference>
<dbReference type="SUPFAM" id="SSF52374">
    <property type="entry name" value="Nucleotidylyl transferase"/>
    <property type="match status" value="1"/>
</dbReference>
<dbReference type="PROSITE" id="PS00178">
    <property type="entry name" value="AA_TRNA_LIGASE_I"/>
    <property type="match status" value="1"/>
</dbReference>
<evidence type="ECO:0000255" key="1">
    <source>
        <dbReference type="HAMAP-Rule" id="MF_00123"/>
    </source>
</evidence>